<organism>
    <name type="scientific">Burkholderia multivorans (strain ATCC 17616 / 249)</name>
    <dbReference type="NCBI Taxonomy" id="395019"/>
    <lineage>
        <taxon>Bacteria</taxon>
        <taxon>Pseudomonadati</taxon>
        <taxon>Pseudomonadota</taxon>
        <taxon>Betaproteobacteria</taxon>
        <taxon>Burkholderiales</taxon>
        <taxon>Burkholderiaceae</taxon>
        <taxon>Burkholderia</taxon>
        <taxon>Burkholderia cepacia complex</taxon>
    </lineage>
</organism>
<sequence>MALAKRIIPCLDVTAGRVVKGVNFVELRDAGDPVEIARRYDEQGADELTFLDITATSDQRDLILPIIEAVASQVFIPLTVGGGVRAVEDVRRLLNAGADKVSMNSSAVANPQLVRDAADKYGSQCIVVAIDAKRVSADGEAPRWEVFTHGGRKGTGLDAIEWARKMAEFGAGEILLTSMDRDGTKSGFDLALTRGVSDAVPVPVIASGGVGSLQDLADGIKDGRADAVLAASIFHYGEHTVGEAKRFMAEQGIPVRL</sequence>
<keyword id="KW-0028">Amino-acid biosynthesis</keyword>
<keyword id="KW-0963">Cytoplasm</keyword>
<keyword id="KW-0368">Histidine biosynthesis</keyword>
<keyword id="KW-0456">Lyase</keyword>
<keyword id="KW-1185">Reference proteome</keyword>
<evidence type="ECO:0000255" key="1">
    <source>
        <dbReference type="HAMAP-Rule" id="MF_01013"/>
    </source>
</evidence>
<proteinExistence type="inferred from homology"/>
<protein>
    <recommendedName>
        <fullName evidence="1">Imidazole glycerol phosphate synthase subunit HisF</fullName>
        <ecNumber evidence="1">4.3.2.10</ecNumber>
    </recommendedName>
    <alternativeName>
        <fullName evidence="1">IGP synthase cyclase subunit</fullName>
    </alternativeName>
    <alternativeName>
        <fullName evidence="1">IGP synthase subunit HisF</fullName>
    </alternativeName>
    <alternativeName>
        <fullName evidence="1">ImGP synthase subunit HisF</fullName>
        <shortName evidence="1">IGPS subunit HisF</shortName>
    </alternativeName>
</protein>
<reference key="1">
    <citation type="journal article" date="2003" name="J. Bacteriol.">
        <title>Distribution and organization of auxotrophic genes on the multichromosomal genome of Burkholderia multivorans ATCC 17616.</title>
        <authorList>
            <person name="Komatsu H."/>
            <person name="Imura Y."/>
            <person name="Ohori A."/>
            <person name="Nagata Y."/>
            <person name="Tsuda M."/>
        </authorList>
    </citation>
    <scope>NUCLEOTIDE SEQUENCE [GENOMIC DNA]</scope>
</reference>
<reference key="2">
    <citation type="submission" date="2007-10" db="EMBL/GenBank/DDBJ databases">
        <title>Complete sequence of chromosome 1 of Burkholderia multivorans ATCC 17616.</title>
        <authorList>
            <person name="Copeland A."/>
            <person name="Lucas S."/>
            <person name="Lapidus A."/>
            <person name="Barry K."/>
            <person name="Glavina del Rio T."/>
            <person name="Dalin E."/>
            <person name="Tice H."/>
            <person name="Pitluck S."/>
            <person name="Chain P."/>
            <person name="Malfatti S."/>
            <person name="Shin M."/>
            <person name="Vergez L."/>
            <person name="Schmutz J."/>
            <person name="Larimer F."/>
            <person name="Land M."/>
            <person name="Hauser L."/>
            <person name="Kyrpides N."/>
            <person name="Kim E."/>
            <person name="Tiedje J."/>
            <person name="Richardson P."/>
        </authorList>
    </citation>
    <scope>NUCLEOTIDE SEQUENCE [LARGE SCALE GENOMIC DNA]</scope>
    <source>
        <strain>ATCC 17616 / 249</strain>
    </source>
</reference>
<reference key="3">
    <citation type="submission" date="2007-04" db="EMBL/GenBank/DDBJ databases">
        <title>Complete genome sequence of Burkholderia multivorans ATCC 17616.</title>
        <authorList>
            <person name="Ohtsubo Y."/>
            <person name="Yamashita A."/>
            <person name="Kurokawa K."/>
            <person name="Takami H."/>
            <person name="Yuhara S."/>
            <person name="Nishiyama E."/>
            <person name="Endo R."/>
            <person name="Miyazaki R."/>
            <person name="Ono A."/>
            <person name="Yano K."/>
            <person name="Ito M."/>
            <person name="Sota M."/>
            <person name="Yuji N."/>
            <person name="Hattori M."/>
            <person name="Tsuda M."/>
        </authorList>
    </citation>
    <scope>NUCLEOTIDE SEQUENCE [LARGE SCALE GENOMIC DNA]</scope>
    <source>
        <strain>ATCC 17616 / 249</strain>
    </source>
</reference>
<comment type="function">
    <text evidence="1">IGPS catalyzes the conversion of PRFAR and glutamine to IGP, AICAR and glutamate. The HisF subunit catalyzes the cyclization activity that produces IGP and AICAR from PRFAR using the ammonia provided by the HisH subunit.</text>
</comment>
<comment type="catalytic activity">
    <reaction evidence="1">
        <text>5-[(5-phospho-1-deoxy-D-ribulos-1-ylimino)methylamino]-1-(5-phospho-beta-D-ribosyl)imidazole-4-carboxamide + L-glutamine = D-erythro-1-(imidazol-4-yl)glycerol 3-phosphate + 5-amino-1-(5-phospho-beta-D-ribosyl)imidazole-4-carboxamide + L-glutamate + H(+)</text>
        <dbReference type="Rhea" id="RHEA:24793"/>
        <dbReference type="ChEBI" id="CHEBI:15378"/>
        <dbReference type="ChEBI" id="CHEBI:29985"/>
        <dbReference type="ChEBI" id="CHEBI:58278"/>
        <dbReference type="ChEBI" id="CHEBI:58359"/>
        <dbReference type="ChEBI" id="CHEBI:58475"/>
        <dbReference type="ChEBI" id="CHEBI:58525"/>
        <dbReference type="EC" id="4.3.2.10"/>
    </reaction>
</comment>
<comment type="pathway">
    <text evidence="1">Amino-acid biosynthesis; L-histidine biosynthesis; L-histidine from 5-phospho-alpha-D-ribose 1-diphosphate: step 5/9.</text>
</comment>
<comment type="subunit">
    <text evidence="1">Heterodimer of HisH and HisF.</text>
</comment>
<comment type="subcellular location">
    <subcellularLocation>
        <location evidence="1">Cytoplasm</location>
    </subcellularLocation>
</comment>
<comment type="similarity">
    <text evidence="1">Belongs to the HisA/HisF family.</text>
</comment>
<accession>Q845U7</accession>
<accession>A9AE07</accession>
<gene>
    <name evidence="1" type="primary">hisF</name>
    <name type="ordered locus">Bmul_0334</name>
    <name type="ordered locus">BMULJ_02920</name>
</gene>
<feature type="chain" id="PRO_0000142136" description="Imidazole glycerol phosphate synthase subunit HisF">
    <location>
        <begin position="1"/>
        <end position="257"/>
    </location>
</feature>
<feature type="active site" evidence="1">
    <location>
        <position position="12"/>
    </location>
</feature>
<feature type="active site" evidence="1">
    <location>
        <position position="131"/>
    </location>
</feature>
<name>HIS6_BURM1</name>
<dbReference type="EC" id="4.3.2.10" evidence="1"/>
<dbReference type="EMBL" id="AB091436">
    <property type="protein sequence ID" value="BAC65276.1"/>
    <property type="molecule type" value="Genomic_DNA"/>
</dbReference>
<dbReference type="EMBL" id="CP000868">
    <property type="protein sequence ID" value="ABX14029.1"/>
    <property type="molecule type" value="Genomic_DNA"/>
</dbReference>
<dbReference type="EMBL" id="AP009385">
    <property type="protein sequence ID" value="BAG44805.1"/>
    <property type="molecule type" value="Genomic_DNA"/>
</dbReference>
<dbReference type="RefSeq" id="WP_006400578.1">
    <property type="nucleotide sequence ID" value="NC_010804.1"/>
</dbReference>
<dbReference type="SMR" id="Q845U7"/>
<dbReference type="STRING" id="395019.BMULJ_02920"/>
<dbReference type="KEGG" id="bmj:BMULJ_02920"/>
<dbReference type="KEGG" id="bmu:Bmul_0334"/>
<dbReference type="eggNOG" id="COG0107">
    <property type="taxonomic scope" value="Bacteria"/>
</dbReference>
<dbReference type="HOGENOM" id="CLU_048577_4_0_4"/>
<dbReference type="UniPathway" id="UPA00031">
    <property type="reaction ID" value="UER00010"/>
</dbReference>
<dbReference type="Proteomes" id="UP000008815">
    <property type="component" value="Chromosome 1"/>
</dbReference>
<dbReference type="GO" id="GO:0005737">
    <property type="term" value="C:cytoplasm"/>
    <property type="evidence" value="ECO:0007669"/>
    <property type="project" value="UniProtKB-SubCell"/>
</dbReference>
<dbReference type="GO" id="GO:0000107">
    <property type="term" value="F:imidazoleglycerol-phosphate synthase activity"/>
    <property type="evidence" value="ECO:0007669"/>
    <property type="project" value="UniProtKB-UniRule"/>
</dbReference>
<dbReference type="GO" id="GO:0016829">
    <property type="term" value="F:lyase activity"/>
    <property type="evidence" value="ECO:0007669"/>
    <property type="project" value="UniProtKB-KW"/>
</dbReference>
<dbReference type="GO" id="GO:0000105">
    <property type="term" value="P:L-histidine biosynthetic process"/>
    <property type="evidence" value="ECO:0007669"/>
    <property type="project" value="UniProtKB-UniRule"/>
</dbReference>
<dbReference type="CDD" id="cd04731">
    <property type="entry name" value="HisF"/>
    <property type="match status" value="1"/>
</dbReference>
<dbReference type="FunFam" id="3.20.20.70:FF:000006">
    <property type="entry name" value="Imidazole glycerol phosphate synthase subunit HisF"/>
    <property type="match status" value="1"/>
</dbReference>
<dbReference type="Gene3D" id="3.20.20.70">
    <property type="entry name" value="Aldolase class I"/>
    <property type="match status" value="1"/>
</dbReference>
<dbReference type="HAMAP" id="MF_01013">
    <property type="entry name" value="HisF"/>
    <property type="match status" value="1"/>
</dbReference>
<dbReference type="InterPro" id="IPR013785">
    <property type="entry name" value="Aldolase_TIM"/>
</dbReference>
<dbReference type="InterPro" id="IPR006062">
    <property type="entry name" value="His_biosynth"/>
</dbReference>
<dbReference type="InterPro" id="IPR004651">
    <property type="entry name" value="HisF"/>
</dbReference>
<dbReference type="InterPro" id="IPR050064">
    <property type="entry name" value="IGPS_HisA/HisF"/>
</dbReference>
<dbReference type="InterPro" id="IPR011060">
    <property type="entry name" value="RibuloseP-bd_barrel"/>
</dbReference>
<dbReference type="NCBIfam" id="TIGR00735">
    <property type="entry name" value="hisF"/>
    <property type="match status" value="1"/>
</dbReference>
<dbReference type="PANTHER" id="PTHR21235:SF2">
    <property type="entry name" value="IMIDAZOLE GLYCEROL PHOSPHATE SYNTHASE HISHF"/>
    <property type="match status" value="1"/>
</dbReference>
<dbReference type="PANTHER" id="PTHR21235">
    <property type="entry name" value="IMIDAZOLE GLYCEROL PHOSPHATE SYNTHASE SUBUNIT HISF/H IGP SYNTHASE SUBUNIT HISF/H"/>
    <property type="match status" value="1"/>
</dbReference>
<dbReference type="Pfam" id="PF00977">
    <property type="entry name" value="His_biosynth"/>
    <property type="match status" value="1"/>
</dbReference>
<dbReference type="SUPFAM" id="SSF51366">
    <property type="entry name" value="Ribulose-phoshate binding barrel"/>
    <property type="match status" value="1"/>
</dbReference>